<feature type="chain" id="PRO_0000122527" description="Putative sucrose transport protein SUC6">
    <location>
        <begin position="1"/>
        <end position="492"/>
    </location>
</feature>
<feature type="topological domain" description="Cytoplasmic" evidence="2">
    <location>
        <begin position="1"/>
        <end position="33"/>
    </location>
</feature>
<feature type="transmembrane region" description="Helical" evidence="2">
    <location>
        <begin position="34"/>
        <end position="54"/>
    </location>
</feature>
<feature type="topological domain" description="Extracellular" evidence="2">
    <location>
        <begin position="55"/>
        <end position="68"/>
    </location>
</feature>
<feature type="transmembrane region" description="Helical" evidence="2">
    <location>
        <begin position="69"/>
        <end position="89"/>
    </location>
</feature>
<feature type="topological domain" description="Cytoplasmic" evidence="2">
    <location>
        <begin position="90"/>
        <end position="101"/>
    </location>
</feature>
<feature type="transmembrane region" description="Helical" evidence="2">
    <location>
        <begin position="102"/>
        <end position="122"/>
    </location>
</feature>
<feature type="topological domain" description="Extracellular" evidence="2">
    <location>
        <begin position="123"/>
        <end position="139"/>
    </location>
</feature>
<feature type="transmembrane region" description="Helical" evidence="2">
    <location>
        <begin position="140"/>
        <end position="160"/>
    </location>
</feature>
<feature type="topological domain" description="Cytoplasmic" evidence="2">
    <location>
        <begin position="161"/>
        <end position="181"/>
    </location>
</feature>
<feature type="transmembrane region" description="Helical" evidence="2">
    <location>
        <begin position="182"/>
        <end position="202"/>
    </location>
</feature>
<feature type="topological domain" description="Extracellular" evidence="2">
    <location>
        <begin position="203"/>
        <end position="224"/>
    </location>
</feature>
<feature type="transmembrane region" description="Helical" evidence="2">
    <location>
        <begin position="225"/>
        <end position="245"/>
    </location>
</feature>
<feature type="topological domain" description="Cytoplasmic" evidence="2">
    <location>
        <begin position="246"/>
        <end position="277"/>
    </location>
</feature>
<feature type="transmembrane region" description="Helical" evidence="2">
    <location>
        <begin position="278"/>
        <end position="298"/>
    </location>
</feature>
<feature type="topological domain" description="Extracellular" evidence="2">
    <location>
        <begin position="299"/>
        <end position="324"/>
    </location>
</feature>
<feature type="transmembrane region" description="Helical" evidence="2">
    <location>
        <begin position="325"/>
        <end position="345"/>
    </location>
</feature>
<feature type="topological domain" description="Cytoplasmic" evidence="2">
    <location>
        <begin position="346"/>
        <end position="359"/>
    </location>
</feature>
<feature type="transmembrane region" description="Helical" evidence="2">
    <location>
        <begin position="360"/>
        <end position="380"/>
    </location>
</feature>
<feature type="topological domain" description="Extracellular" evidence="2">
    <location>
        <begin position="381"/>
        <end position="403"/>
    </location>
</feature>
<feature type="transmembrane region" description="Helical" evidence="2">
    <location>
        <begin position="404"/>
        <end position="424"/>
    </location>
</feature>
<feature type="topological domain" description="Cytoplasmic" evidence="2">
    <location>
        <begin position="425"/>
        <end position="446"/>
    </location>
</feature>
<feature type="transmembrane region" description="Helical" evidence="2">
    <location>
        <begin position="447"/>
        <end position="467"/>
    </location>
</feature>
<feature type="topological domain" description="Extracellular" evidence="2">
    <location>
        <begin position="468"/>
        <end position="469"/>
    </location>
</feature>
<feature type="transmembrane region" description="Helical" evidence="2">
    <location>
        <begin position="470"/>
        <end position="490"/>
    </location>
</feature>
<feature type="topological domain" description="Cytoplasmic" evidence="2">
    <location>
        <begin position="491"/>
        <end position="492"/>
    </location>
</feature>
<feature type="region of interest" description="Disordered" evidence="3">
    <location>
        <begin position="1"/>
        <end position="26"/>
    </location>
</feature>
<feature type="compositionally biased region" description="Polar residues" evidence="3">
    <location>
        <begin position="14"/>
        <end position="23"/>
    </location>
</feature>
<feature type="modified residue" description="Phosphoserine" evidence="1">
    <location>
        <position position="17"/>
    </location>
</feature>
<feature type="sequence conflict" description="In Ref. 1; CAE53179." evidence="5" ref="1">
    <original>S</original>
    <variation>A</variation>
    <location>
        <position position="21"/>
    </location>
</feature>
<feature type="sequence conflict" description="In Ref. 1; CAE53179." evidence="5" ref="1">
    <original>S</original>
    <variation>P</variation>
    <location>
        <position position="38"/>
    </location>
</feature>
<feature type="sequence conflict" description="In Ref. 1; CAE53179." evidence="5" ref="1">
    <original>M</original>
    <variation>T</variation>
    <location>
        <position position="106"/>
    </location>
</feature>
<feature type="sequence conflict" description="In Ref. 1; CAE53179." evidence="5" ref="1">
    <original>K</original>
    <variation>T</variation>
    <location>
        <position position="175"/>
    </location>
</feature>
<feature type="sequence conflict" description="In Ref. 1; CAE53179." evidence="5" ref="1">
    <original>A</original>
    <variation>G</variation>
    <location>
        <position position="189"/>
    </location>
</feature>
<feature type="sequence conflict" description="In Ref. 1; CAE53179." evidence="5" ref="1">
    <original>Y</original>
    <variation>H</variation>
    <location>
        <position position="196"/>
    </location>
</feature>
<feature type="sequence conflict" description="In Ref. 1; CAE53179." evidence="5" ref="1">
    <original>F</original>
    <variation>C</variation>
    <location>
        <position position="342"/>
    </location>
</feature>
<feature type="sequence conflict" description="In Ref. 1; CAE53179." evidence="5" ref="1">
    <original>E</original>
    <variation>G</variation>
    <location>
        <position position="383"/>
    </location>
</feature>
<feature type="sequence conflict" description="In Ref. 1; CAE53179." evidence="5" ref="1">
    <original>R</original>
    <variation>K</variation>
    <location>
        <position position="387"/>
    </location>
</feature>
<feature type="sequence conflict" description="In Ref. 1; CAE53179." evidence="5" ref="1">
    <original>L</original>
    <variation>F</variation>
    <location>
        <position position="409"/>
    </location>
</feature>
<feature type="sequence conflict" description="In Ref. 1; CAE53179." evidence="5" ref="1">
    <original>A</original>
    <variation>V</variation>
    <location>
        <position position="415"/>
    </location>
</feature>
<feature type="sequence conflict" description="In Ref. 1; CAE53179." evidence="5" ref="1">
    <original>A</original>
    <variation>V</variation>
    <location>
        <position position="423"/>
    </location>
</feature>
<feature type="sequence conflict" description="In Ref. 1; CAE53179." evidence="5" ref="1">
    <original>SII</original>
    <variation>FIN</variation>
    <location>
        <begin position="426"/>
        <end position="428"/>
    </location>
</feature>
<feature type="sequence conflict" description="In Ref. 1; CAE53179." evidence="5" ref="1">
    <original>T</original>
    <variation>A</variation>
    <location>
        <position position="446"/>
    </location>
</feature>
<feature type="sequence conflict" description="In Ref. 1; CAE53179." evidence="5" ref="1">
    <original>A</original>
    <variation>T</variation>
    <location>
        <position position="479"/>
    </location>
</feature>
<organism>
    <name type="scientific">Arabidopsis thaliana</name>
    <name type="common">Mouse-ear cress</name>
    <dbReference type="NCBI Taxonomy" id="3702"/>
    <lineage>
        <taxon>Eukaryota</taxon>
        <taxon>Viridiplantae</taxon>
        <taxon>Streptophyta</taxon>
        <taxon>Embryophyta</taxon>
        <taxon>Tracheophyta</taxon>
        <taxon>Spermatophyta</taxon>
        <taxon>Magnoliopsida</taxon>
        <taxon>eudicotyledons</taxon>
        <taxon>Gunneridae</taxon>
        <taxon>Pentapetalae</taxon>
        <taxon>rosids</taxon>
        <taxon>malvids</taxon>
        <taxon>Brassicales</taxon>
        <taxon>Brassicaceae</taxon>
        <taxon>Camelineae</taxon>
        <taxon>Arabidopsis</taxon>
    </lineage>
</organism>
<proteinExistence type="uncertain"/>
<reference key="1">
    <citation type="submission" date="2003-10" db="EMBL/GenBank/DDBJ databases">
        <title>SNPs and splicing variants of sucrose transporter genes in different ecotypes of Arabidopsis thaliana.</title>
        <authorList>
            <person name="Sauer N."/>
            <person name="Ludwig A."/>
            <person name="Knoblauch A."/>
            <person name="Klebl F."/>
        </authorList>
    </citation>
    <scope>NUCLEOTIDE SEQUENCE [MRNA]</scope>
    <source>
        <strain>cv. C24</strain>
    </source>
</reference>
<reference key="2">
    <citation type="journal article" date="1998" name="DNA Res.">
        <title>Structural analysis of Arabidopsis thaliana chromosome 5. VIII. Sequence features of the regions of 1,081,958 bp covered by seventeen physically assigned P1 and TAC clones.</title>
        <authorList>
            <person name="Asamizu E."/>
            <person name="Sato S."/>
            <person name="Kaneko T."/>
            <person name="Nakamura Y."/>
            <person name="Kotani H."/>
            <person name="Miyajima N."/>
            <person name="Tabata S."/>
        </authorList>
    </citation>
    <scope>NUCLEOTIDE SEQUENCE [LARGE SCALE GENOMIC DNA]</scope>
    <source>
        <strain>cv. Columbia</strain>
    </source>
</reference>
<reference key="3">
    <citation type="journal article" date="2017" name="Plant J.">
        <title>Araport11: a complete reannotation of the Arabidopsis thaliana reference genome.</title>
        <authorList>
            <person name="Cheng C.Y."/>
            <person name="Krishnakumar V."/>
            <person name="Chan A.P."/>
            <person name="Thibaud-Nissen F."/>
            <person name="Schobel S."/>
            <person name="Town C.D."/>
        </authorList>
    </citation>
    <scope>GENOME REANNOTATION</scope>
    <source>
        <strain>cv. Columbia</strain>
    </source>
</reference>
<reference key="4">
    <citation type="journal article" date="2004" name="Plant J.">
        <title>AtSUC8 and AtSUC9 encode functional sucrose transporters, but the closely related AtSUC6 and AtSUC7 genes encode aberrant proteins in different Arabidopsis ecotypes.</title>
        <authorList>
            <person name="Sauer N."/>
            <person name="Ludwig A."/>
            <person name="Knoblauch A."/>
            <person name="Rothe P."/>
            <person name="Gahrtz M."/>
            <person name="Klebl F."/>
        </authorList>
    </citation>
    <scope>NOMENCLATURE</scope>
</reference>
<protein>
    <recommendedName>
        <fullName evidence="4">Putative sucrose transport protein SUC6</fullName>
        <shortName evidence="4">AtSUC6</shortName>
    </recommendedName>
    <alternativeName>
        <fullName>Sucrose permease 6</fullName>
    </alternativeName>
    <alternativeName>
        <fullName evidence="4">Sucrose-proton symporter 6</fullName>
    </alternativeName>
</protein>
<dbReference type="EMBL" id="AJ604565">
    <property type="protein sequence ID" value="CAE53179.1"/>
    <property type="molecule type" value="mRNA"/>
</dbReference>
<dbReference type="EMBL" id="AB016875">
    <property type="protein sequence ID" value="BAB11624.1"/>
    <property type="molecule type" value="Genomic_DNA"/>
</dbReference>
<dbReference type="EMBL" id="CP002688">
    <property type="protein sequence ID" value="AED94987.1"/>
    <property type="molecule type" value="Genomic_DNA"/>
</dbReference>
<dbReference type="RefSeq" id="NP_199174.1">
    <property type="nucleotide sequence ID" value="NM_123727.2"/>
</dbReference>
<dbReference type="SMR" id="Q6A329"/>
<dbReference type="BioGRID" id="19631">
    <property type="interactions" value="2"/>
</dbReference>
<dbReference type="FunCoup" id="Q6A329">
    <property type="interactions" value="840"/>
</dbReference>
<dbReference type="STRING" id="3702.Q6A329"/>
<dbReference type="PaxDb" id="3702-AT5G43610.1"/>
<dbReference type="ProteomicsDB" id="245229"/>
<dbReference type="EnsemblPlants" id="AT5G43610.1">
    <property type="protein sequence ID" value="AT5G43610.1"/>
    <property type="gene ID" value="AT5G43610"/>
</dbReference>
<dbReference type="GeneID" id="834381"/>
<dbReference type="Gramene" id="AT5G43610.1">
    <property type="protein sequence ID" value="AT5G43610.1"/>
    <property type="gene ID" value="AT5G43610"/>
</dbReference>
<dbReference type="KEGG" id="ath:AT5G43610"/>
<dbReference type="Araport" id="AT5G43610"/>
<dbReference type="TAIR" id="AT5G43610">
    <property type="gene designation" value="SUC6"/>
</dbReference>
<dbReference type="eggNOG" id="KOG0637">
    <property type="taxonomic scope" value="Eukaryota"/>
</dbReference>
<dbReference type="HOGENOM" id="CLU_025234_3_0_1"/>
<dbReference type="InParanoid" id="Q6A329"/>
<dbReference type="OMA" id="DIWIASH"/>
<dbReference type="PhylomeDB" id="Q6A329"/>
<dbReference type="UniPathway" id="UPA00238"/>
<dbReference type="Proteomes" id="UP000006548">
    <property type="component" value="Chromosome 5"/>
</dbReference>
<dbReference type="GO" id="GO:0005886">
    <property type="term" value="C:plasma membrane"/>
    <property type="evidence" value="ECO:0007669"/>
    <property type="project" value="UniProtKB-SubCell"/>
</dbReference>
<dbReference type="GO" id="GO:0008515">
    <property type="term" value="F:sucrose transmembrane transporter activity"/>
    <property type="evidence" value="ECO:0007669"/>
    <property type="project" value="InterPro"/>
</dbReference>
<dbReference type="GO" id="GO:0015293">
    <property type="term" value="F:symporter activity"/>
    <property type="evidence" value="ECO:0007669"/>
    <property type="project" value="UniProtKB-KW"/>
</dbReference>
<dbReference type="GO" id="GO:0005985">
    <property type="term" value="P:sucrose metabolic process"/>
    <property type="evidence" value="ECO:0007669"/>
    <property type="project" value="UniProtKB-UniPathway"/>
</dbReference>
<dbReference type="CDD" id="cd17313">
    <property type="entry name" value="MFS_SLC45_SUC"/>
    <property type="match status" value="1"/>
</dbReference>
<dbReference type="FunFam" id="1.20.1250.20:FF:000174">
    <property type="entry name" value="Sucrose transport protein"/>
    <property type="match status" value="1"/>
</dbReference>
<dbReference type="Gene3D" id="1.20.1250.20">
    <property type="entry name" value="MFS general substrate transporter like domains"/>
    <property type="match status" value="1"/>
</dbReference>
<dbReference type="InterPro" id="IPR036259">
    <property type="entry name" value="MFS_trans_sf"/>
</dbReference>
<dbReference type="InterPro" id="IPR005989">
    <property type="entry name" value="Suc_symporter_pln"/>
</dbReference>
<dbReference type="NCBIfam" id="TIGR01301">
    <property type="entry name" value="GPH_sucrose"/>
    <property type="match status" value="1"/>
</dbReference>
<dbReference type="PANTHER" id="PTHR19432:SF94">
    <property type="entry name" value="SUCROSE TRANSPORT PROTEIN SUC7-RELATED"/>
    <property type="match status" value="1"/>
</dbReference>
<dbReference type="PANTHER" id="PTHR19432">
    <property type="entry name" value="SUGAR TRANSPORTER"/>
    <property type="match status" value="1"/>
</dbReference>
<dbReference type="Pfam" id="PF13347">
    <property type="entry name" value="MFS_2"/>
    <property type="match status" value="1"/>
</dbReference>
<dbReference type="SUPFAM" id="SSF103473">
    <property type="entry name" value="MFS general substrate transporter"/>
    <property type="match status" value="1"/>
</dbReference>
<comment type="function">
    <text>May be responsible for the transport of glucosides into the cell, with the concomitant uptake of protons (symport system). Does not seem to transport sucrose.</text>
</comment>
<comment type="pathway">
    <text>Glycan biosynthesis; sucrose metabolism.</text>
</comment>
<comment type="subcellular location">
    <subcellularLocation>
        <location evidence="5">Cell membrane</location>
        <topology evidence="5">Multi-pass membrane protein</topology>
    </subcellularLocation>
</comment>
<comment type="similarity">
    <text evidence="5">Belongs to the glycoside-pentoside-hexuronide (GPH) cation symporter transporter (TC 2.A.2.4) family.</text>
</comment>
<comment type="caution">
    <text evidence="5">Could be the product of a pseudogene.</text>
</comment>
<name>SUC6_ARATH</name>
<gene>
    <name evidence="4" type="primary">SUC6</name>
    <name type="synonym">SUC13</name>
    <name evidence="6" type="ordered locus">At5g43610</name>
    <name evidence="7" type="ORF">K9D7.11</name>
</gene>
<evidence type="ECO:0000250" key="1">
    <source>
        <dbReference type="UniProtKB" id="Q39232"/>
    </source>
</evidence>
<evidence type="ECO:0000255" key="2"/>
<evidence type="ECO:0000256" key="3">
    <source>
        <dbReference type="SAM" id="MobiDB-lite"/>
    </source>
</evidence>
<evidence type="ECO:0000303" key="4">
    <source>
    </source>
</evidence>
<evidence type="ECO:0000305" key="5"/>
<evidence type="ECO:0000312" key="6">
    <source>
        <dbReference type="Araport" id="AT5G43610"/>
    </source>
</evidence>
<evidence type="ECO:0000312" key="7">
    <source>
        <dbReference type="EMBL" id="BAB11624.1"/>
    </source>
</evidence>
<keyword id="KW-1003">Cell membrane</keyword>
<keyword id="KW-0472">Membrane</keyword>
<keyword id="KW-0597">Phosphoprotein</keyword>
<keyword id="KW-1185">Reference proteome</keyword>
<keyword id="KW-0762">Sugar transport</keyword>
<keyword id="KW-0769">Symport</keyword>
<keyword id="KW-0812">Transmembrane</keyword>
<keyword id="KW-1133">Transmembrane helix</keyword>
<keyword id="KW-0813">Transport</keyword>
<sequence length="492" mass="52727">MSDLQANKDAAAVNRQSSSSSADLNGPSPMRKMISVASIAAGIQFGWALQLSLLTPYVQLLGVPHKWSSFIWLCGPVSGLLVQPSVGYFSDRCKSRFGRRRPFIAMGALLVAVAVVLIGYAADFGHSMGDKVDEPVKMRAVVIFALGFWILDVANNTLQGPCRAFLGDLAAGDAKKTRTANAFFSFFMAVGNVLGYAAGSYTNLYKIFPFTMTKACDIYCANLKSCFFLSITLLLVVTIIALWYVEDKQWSPKADSDNEKTPFFGEIFGAFKVMKRPMWMLLIVTALNWIAWFPFLLYDTDWMGREVYGGDSKGDDKMKKLYNQGIHVGGLGLMLNSIVLGFMSLGIEGISRKMGGAKRLWGAVNIILAVCLAMTVLVTKKAEEHRRIAGPMALPTDGIRAGALTLFALLGIPLAITFSIPFALASIISSSSGAGQGLSLGVLNMTIVIPQMVVSFGVGPIDALFGGGNLPGFVVGAIAAAISSVVAFSVLP</sequence>
<accession>Q6A329</accession>
<accession>Q9FIX9</accession>